<organism evidence="11">
    <name type="scientific">Caenorhabditis elegans</name>
    <dbReference type="NCBI Taxonomy" id="6239"/>
    <lineage>
        <taxon>Eukaryota</taxon>
        <taxon>Metazoa</taxon>
        <taxon>Ecdysozoa</taxon>
        <taxon>Nematoda</taxon>
        <taxon>Chromadorea</taxon>
        <taxon>Rhabditida</taxon>
        <taxon>Rhabditina</taxon>
        <taxon>Rhabditomorpha</taxon>
        <taxon>Rhabditoidea</taxon>
        <taxon>Rhabditidae</taxon>
        <taxon>Peloderinae</taxon>
        <taxon>Caenorhabditis</taxon>
    </lineage>
</organism>
<feature type="signal peptide" evidence="1">
    <location>
        <begin position="1"/>
        <end position="18"/>
    </location>
</feature>
<feature type="chain" id="PRO_0000433878" description="Synaptogenesis protein syg-1" evidence="10">
    <location>
        <begin position="19"/>
        <end position="730"/>
    </location>
</feature>
<feature type="topological domain" description="Extracellular" evidence="10">
    <location>
        <begin position="19"/>
        <end position="551"/>
    </location>
</feature>
<feature type="transmembrane region" description="Helical" evidence="1">
    <location>
        <begin position="552"/>
        <end position="572"/>
    </location>
</feature>
<feature type="topological domain" description="Cytoplasmic" evidence="10">
    <location>
        <begin position="573"/>
        <end position="730"/>
    </location>
</feature>
<feature type="domain" description="Ig-like 1" evidence="2">
    <location>
        <begin position="23"/>
        <end position="123"/>
    </location>
</feature>
<feature type="domain" description="Ig-like 2" evidence="2">
    <location>
        <begin position="131"/>
        <end position="265"/>
    </location>
</feature>
<feature type="domain" description="Ig-like 3" evidence="2">
    <location>
        <begin position="270"/>
        <end position="352"/>
    </location>
</feature>
<feature type="domain" description="Ig-like 4" evidence="2">
    <location>
        <begin position="357"/>
        <end position="433"/>
    </location>
</feature>
<feature type="domain" description="Ig-like 5" evidence="2">
    <location>
        <begin position="441"/>
        <end position="540"/>
    </location>
</feature>
<feature type="glycosylation site" description="N-linked (GlcNAc...) asparagine" evidence="15 16 17">
    <location>
        <position position="93"/>
    </location>
</feature>
<feature type="glycosylation site" description="N-linked (GlcNAc...) asparagine" evidence="15">
    <location>
        <position position="206"/>
    </location>
</feature>
<feature type="disulfide bond" evidence="15">
    <location>
        <begin position="44"/>
        <end position="104"/>
    </location>
</feature>
<feature type="disulfide bond" evidence="15">
    <location>
        <begin position="152"/>
        <end position="246"/>
    </location>
</feature>
<feature type="disulfide bond" evidence="2">
    <location>
        <begin position="292"/>
        <end position="336"/>
    </location>
</feature>
<feature type="disulfide bond" evidence="2">
    <location>
        <begin position="378"/>
        <end position="420"/>
    </location>
</feature>
<feature type="disulfide bond" evidence="2">
    <location>
        <begin position="462"/>
        <end position="519"/>
    </location>
</feature>
<feature type="splice variant" id="VSP_057850" description="In isoform a." evidence="10">
    <original>EHSYGSFGSGLSTPGGVSDMYGVAMSDKLPVMETLQEV</original>
    <variation>VRRGDERQIAGYGDATGSGDSQNVQLQLPLVAGSGPTN</variation>
    <location>
        <begin position="666"/>
        <end position="703"/>
    </location>
</feature>
<feature type="splice variant" id="VSP_057851" description="In isoform a." evidence="10">
    <location>
        <begin position="704"/>
        <end position="730"/>
    </location>
</feature>
<feature type="mutagenesis site" description="Reduced syg-2 interaction." evidence="9">
    <original>Q</original>
    <variation>A</variation>
    <location>
        <position position="54"/>
    </location>
</feature>
<feature type="mutagenesis site" description="Reduced syg-2 interaction." evidence="9">
    <original>F</original>
    <variation>A</variation>
    <location>
        <position position="60"/>
    </location>
</feature>
<feature type="mutagenesis site" description="Reduced syg-2 interaction." evidence="9">
    <original>Q</original>
    <variation>A</variation>
    <location>
        <position position="105"/>
    </location>
</feature>
<feature type="mutagenesis site" description="Impaired binding to WAVE complex." evidence="8">
    <original>SF</original>
    <variation>AA</variation>
    <location>
        <begin position="671"/>
        <end position="672"/>
    </location>
</feature>
<feature type="strand" evidence="20">
    <location>
        <begin position="24"/>
        <end position="27"/>
    </location>
</feature>
<feature type="strand" evidence="20">
    <location>
        <begin position="32"/>
        <end position="35"/>
    </location>
</feature>
<feature type="strand" evidence="20">
    <location>
        <begin position="40"/>
        <end position="42"/>
    </location>
</feature>
<feature type="strand" evidence="20">
    <location>
        <begin position="45"/>
        <end position="48"/>
    </location>
</feature>
<feature type="strand" evidence="20">
    <location>
        <begin position="53"/>
        <end position="57"/>
    </location>
</feature>
<feature type="strand" evidence="20">
    <location>
        <begin position="66"/>
        <end position="68"/>
    </location>
</feature>
<feature type="strand" evidence="20">
    <location>
        <begin position="76"/>
        <end position="80"/>
    </location>
</feature>
<feature type="helix" evidence="20">
    <location>
        <begin position="82"/>
        <end position="84"/>
    </location>
</feature>
<feature type="strand" evidence="20">
    <location>
        <begin position="88"/>
        <end position="93"/>
    </location>
</feature>
<feature type="helix" evidence="20">
    <location>
        <begin position="96"/>
        <end position="98"/>
    </location>
</feature>
<feature type="strand" evidence="20">
    <location>
        <begin position="100"/>
        <end position="106"/>
    </location>
</feature>
<feature type="strand" evidence="21">
    <location>
        <begin position="110"/>
        <end position="112"/>
    </location>
</feature>
<feature type="strand" evidence="20">
    <location>
        <begin position="120"/>
        <end position="125"/>
    </location>
</feature>
<feature type="strand" evidence="18">
    <location>
        <begin position="132"/>
        <end position="134"/>
    </location>
</feature>
<feature type="strand" evidence="19">
    <location>
        <begin position="136"/>
        <end position="138"/>
    </location>
</feature>
<feature type="strand" evidence="18">
    <location>
        <begin position="140"/>
        <end position="143"/>
    </location>
</feature>
<feature type="strand" evidence="18">
    <location>
        <begin position="148"/>
        <end position="159"/>
    </location>
</feature>
<feature type="strand" evidence="18">
    <location>
        <begin position="162"/>
        <end position="170"/>
    </location>
</feature>
<feature type="strand" evidence="18">
    <location>
        <begin position="173"/>
        <end position="179"/>
    </location>
</feature>
<feature type="helix" evidence="18">
    <location>
        <begin position="183"/>
        <end position="186"/>
    </location>
</feature>
<feature type="strand" evidence="18">
    <location>
        <begin position="203"/>
        <end position="211"/>
    </location>
</feature>
<feature type="strand" evidence="18">
    <location>
        <begin position="225"/>
        <end position="233"/>
    </location>
</feature>
<feature type="helix" evidence="18">
    <location>
        <begin position="237"/>
        <end position="239"/>
    </location>
</feature>
<feature type="strand" evidence="18">
    <location>
        <begin position="243"/>
        <end position="249"/>
    </location>
</feature>
<feature type="strand" evidence="18">
    <location>
        <begin position="257"/>
        <end position="267"/>
    </location>
</feature>
<accession>B1Q236</accession>
<accession>H2L0B4</accession>
<evidence type="ECO:0000255" key="1"/>
<evidence type="ECO:0000255" key="2">
    <source>
        <dbReference type="PROSITE-ProRule" id="PRU00114"/>
    </source>
</evidence>
<evidence type="ECO:0000269" key="3">
    <source>
    </source>
</evidence>
<evidence type="ECO:0000269" key="4">
    <source>
    </source>
</evidence>
<evidence type="ECO:0000269" key="5">
    <source>
    </source>
</evidence>
<evidence type="ECO:0000269" key="6">
    <source>
    </source>
</evidence>
<evidence type="ECO:0000269" key="7">
    <source>
    </source>
</evidence>
<evidence type="ECO:0000269" key="8">
    <source>
    </source>
</evidence>
<evidence type="ECO:0000269" key="9">
    <source>
    </source>
</evidence>
<evidence type="ECO:0000305" key="10"/>
<evidence type="ECO:0000312" key="11">
    <source>
        <dbReference type="Proteomes" id="UP000001940"/>
    </source>
</evidence>
<evidence type="ECO:0000312" key="12">
    <source>
        <dbReference type="WormBase" id="K02E10.8a"/>
    </source>
</evidence>
<evidence type="ECO:0000312" key="13">
    <source>
        <dbReference type="WormBase" id="K02E10.8b"/>
    </source>
</evidence>
<evidence type="ECO:0007744" key="14">
    <source>
        <dbReference type="PDB" id="4OF0"/>
    </source>
</evidence>
<evidence type="ECO:0007744" key="15">
    <source>
        <dbReference type="PDB" id="4OF3"/>
    </source>
</evidence>
<evidence type="ECO:0007744" key="16">
    <source>
        <dbReference type="PDB" id="4OF6"/>
    </source>
</evidence>
<evidence type="ECO:0007744" key="17">
    <source>
        <dbReference type="PDB" id="4OFY"/>
    </source>
</evidence>
<evidence type="ECO:0007829" key="18">
    <source>
        <dbReference type="PDB" id="4OF0"/>
    </source>
</evidence>
<evidence type="ECO:0007829" key="19">
    <source>
        <dbReference type="PDB" id="4OF3"/>
    </source>
</evidence>
<evidence type="ECO:0007829" key="20">
    <source>
        <dbReference type="PDB" id="4OF6"/>
    </source>
</evidence>
<evidence type="ECO:0007829" key="21">
    <source>
        <dbReference type="PDB" id="4OFY"/>
    </source>
</evidence>
<gene>
    <name evidence="13" type="primary">syg-1</name>
    <name evidence="13" type="ORF">K02E10.8</name>
</gene>
<sequence length="730" mass="81107">MVRWQTWPLLLLFQLVTCQQLQQRIVEAPKDTLAAVGETAILTCRVEHQQGPVQWMKDDFGLGTDRDKPLPGNKRYRMVGSAANGEYNLEISNVTLFDDDDFACQISESDHAKAVVSSKAKLTVLVRPTPPKIVKSHHSLKAIAGDPITQSCLSRKGKPPPTIGWAIASDEHGKHIVSWLGESRSKFGGIHAKPEISQETVIAHVNETTQVEEGGNNSREDSSIYSIMSNLSFIPRPEDDHKYLICISQHMTFPNKIEVDSVKLSLRYAPQINLTVASKLPLRENGSALLACNVNAKPLDNVKISWYKGNQKLRETGDTLTFETLKMEDHNRDIFCEATNEIGTTRGSIKLNVAFGARIMSTSQDKEVNEGDNAFFHCATLANPAPAIFWTRGDSDEIIGHGENLTLENVRTWQQGNYNCTATVEGFRKQILSHYLHIRGPPTVSMKDEVSASLDEATEIICEISGRPKTNNVRWTVNGKEINFNNGRITVHQYPKPYGKESILKIKDLKEEDFGVYNCSANNGLGFDNRGTLLKKRNILDWIVITAKFDRMVALAIISAGVLLVSLLCCLCMCRSNCRSRKSKFIDDQSDVTVKCEALDGQYFPEMYSSSPVDNVHLSTKDYISIPQNNPDLDFLGATGSFGPPGGLYPKCFNNSANEYIYNRYEHSYGSFGSGLSTPGGVSDMYGVAMSDKLPVMETLQEVETPKTSNYNFLSSPEVVRPISRTSTHV</sequence>
<name>SYG1_CAEEL</name>
<reference evidence="11" key="1">
    <citation type="journal article" date="1998" name="Science">
        <title>Genome sequence of the nematode C. elegans: a platform for investigating biology.</title>
        <authorList>
            <consortium name="The C. elegans sequencing consortium"/>
        </authorList>
    </citation>
    <scope>NUCLEOTIDE SEQUENCE [LARGE SCALE GENOMIC DNA]</scope>
    <source>
        <strain evidence="11">Bristol N2</strain>
    </source>
</reference>
<reference evidence="10" key="2">
    <citation type="journal article" date="2003" name="Cell">
        <title>The immunoglobulin superfamily protein SYG-1 determines the location of specific synapses in C. elegans.</title>
        <authorList>
            <person name="Shen K."/>
            <person name="Bargmann C.I."/>
        </authorList>
    </citation>
    <scope>FUNCTION</scope>
    <scope>SUBCELLULAR LOCATION</scope>
    <scope>TISSUE SPECIFICITY</scope>
    <scope>DISRUPTION PHENOTYPE</scope>
</reference>
<reference evidence="10" key="3">
    <citation type="journal article" date="2004" name="Cell">
        <title>Synaptic specificity is generated by the synaptic guidepost protein SYG-2 and its receptor, SYG-1.</title>
        <authorList>
            <person name="Shen K."/>
            <person name="Fetter R.D."/>
            <person name="Bargmann C.I."/>
        </authorList>
    </citation>
    <scope>FUNCTION</scope>
    <scope>SUBCELLULAR LOCATION</scope>
    <scope>DISRUPTION PHENOTYPE</scope>
</reference>
<reference evidence="10" key="4">
    <citation type="journal article" date="2007" name="Science">
        <title>Spatial regulation of an E3 ubiquitin ligase directs selective synapse elimination.</title>
        <authorList>
            <person name="Ding M."/>
            <person name="Chao D."/>
            <person name="Wang G."/>
            <person name="Shen K."/>
        </authorList>
    </citation>
    <scope>FUNCTION</scope>
    <scope>INTERACTION WITH SKR-1</scope>
    <scope>SUBCELLULAR LOCATION</scope>
    <scope>DEVELOPMENTAL STAGE</scope>
    <scope>DISRUPTION PHENOTYPE</scope>
</reference>
<reference evidence="10" key="5">
    <citation type="journal article" date="2008" name="Mol. Cell. Neurosci.">
        <title>Functional dissection of SYG-1 and SYG-2, cell adhesion molecules required for selective synaptogenesis in C. elegans.</title>
        <authorList>
            <person name="Chao D.L."/>
            <person name="Shen K."/>
        </authorList>
    </citation>
    <scope>TISSUE SPECIFICITY</scope>
    <scope>DOMAIN</scope>
</reference>
<reference evidence="10" key="6">
    <citation type="journal article" date="2011" name="PLoS ONE">
        <title>Functional and spatial analysis of C. elegans SYG-1 and SYG-2, orthologs of the Neph/nephrin cell adhesion module directing selective synaptogenesis.</title>
        <authorList>
            <person name="Wanner N."/>
            <person name="Noutsou F."/>
            <person name="Baumeister R."/>
            <person name="Walz G."/>
            <person name="Huber T.B."/>
            <person name="Neumann-Haefelin E."/>
        </authorList>
    </citation>
    <scope>FUNCTION</scope>
    <scope>INTERACTION WITH SYG-2</scope>
    <scope>TISSUE SPECIFICITY</scope>
</reference>
<reference evidence="10" key="7">
    <citation type="journal article" date="2014" name="Cell">
        <title>Local F-actin network links synapse formation and axon branching.</title>
        <authorList>
            <person name="Chia P.H."/>
            <person name="Chen B."/>
            <person name="Li P."/>
            <person name="Rosen M.K."/>
            <person name="Shen K."/>
        </authorList>
    </citation>
    <scope>FUNCTION</scope>
    <scope>INTERACTION WITH THE WAVE REGULATORY COMPLEX</scope>
    <scope>MUTAGENESIS OF 671-SER-PHE-672</scope>
</reference>
<reference evidence="14 15 16" key="8">
    <citation type="journal article" date="2014" name="Cell">
        <title>Extracellular architecture of the SYG-1/SYG-2 adhesion complex instructs synaptogenesis.</title>
        <authorList>
            <person name="Ozkan E."/>
            <person name="Chia P.H."/>
            <person name="Wang R.R."/>
            <person name="Goriatcheva N."/>
            <person name="Borek D."/>
            <person name="Otwinowski Z."/>
            <person name="Walz T."/>
            <person name="Shen K."/>
            <person name="Garcia K.C."/>
        </authorList>
    </citation>
    <scope>X-RAY CRYSTALLOGRAPHY (1.70 ANGSTROMS) OF 19-282 IN COMPLEX WITH SYG-2</scope>
    <scope>FUNCTION</scope>
    <scope>SUBCELLULAR LOCATION</scope>
    <scope>DISULFIDE BOND</scope>
    <scope>GLYCOSYLATION AT ASN-93 AND ASN-206</scope>
    <scope>MUTAGENESIS OF GLN-54; PHE-60 AND GLN-105</scope>
</reference>
<proteinExistence type="evidence at protein level"/>
<keyword id="KW-0002">3D-structure</keyword>
<keyword id="KW-0025">Alternative splicing</keyword>
<keyword id="KW-0130">Cell adhesion</keyword>
<keyword id="KW-1003">Cell membrane</keyword>
<keyword id="KW-0966">Cell projection</keyword>
<keyword id="KW-1015">Disulfide bond</keyword>
<keyword id="KW-0325">Glycoprotein</keyword>
<keyword id="KW-0393">Immunoglobulin domain</keyword>
<keyword id="KW-0472">Membrane</keyword>
<keyword id="KW-0524">Neurogenesis</keyword>
<keyword id="KW-1185">Reference proteome</keyword>
<keyword id="KW-0677">Repeat</keyword>
<keyword id="KW-0732">Signal</keyword>
<keyword id="KW-0770">Synapse</keyword>
<keyword id="KW-0812">Transmembrane</keyword>
<keyword id="KW-1133">Transmembrane helix</keyword>
<comment type="function">
    <text evidence="3 4 5 7 8 9">Cell adhesion protein (PubMed:15035988). Involved in synapse formation in the HSNL egg-laying motor neuron (PubMed:12628183, PubMed:15035988, PubMed:21858180, PubMed:24485456). Inhibits assembly of the SCF(sel-10) E3 ubiquitin ligase complex at synapses, and protects them from elimination (PubMed:17626846). Also required for F-actin assembly at the synaptic region and for axon branch formation (PubMed:24439377).</text>
</comment>
<comment type="subunit">
    <text evidence="5 7 8 9">Interacts with skr-1 (PubMed:17626846). Interacts with syg-2 (PubMed:21858180, PubMed:24485456). Interacts with the WAVE regulatory complex; the interaction leads to formation of a synaptic F-actin network that is required for synapse formation and axon branching (PubMed:24439377).</text>
</comment>
<comment type="interaction">
    <interactant intactId="EBI-321771">
        <id>B1Q236</id>
    </interactant>
    <interactant intactId="EBI-9211201">
        <id>Q9U3P2</id>
        <label>syg-2</label>
    </interactant>
    <organismsDiffer>false</organismsDiffer>
    <experiments>5</experiments>
</comment>
<comment type="subcellular location">
    <subcellularLocation>
        <location evidence="10">Cell membrane</location>
        <topology evidence="1">Single-pass type I membrane protein</topology>
    </subcellularLocation>
    <subcellularLocation>
        <location evidence="3 4 5">Cell projection</location>
        <location evidence="3 4 5">Axon</location>
    </subcellularLocation>
    <subcellularLocation>
        <location evidence="3 9">Synapse</location>
    </subcellularLocation>
</comment>
<comment type="alternative products">
    <event type="alternative splicing"/>
    <isoform>
        <id>B1Q236-1</id>
        <name evidence="13">b</name>
        <sequence type="displayed"/>
    </isoform>
    <isoform>
        <id>B1Q236-2</id>
        <name evidence="12">a</name>
        <sequence type="described" ref="VSP_057850 VSP_057851"/>
    </isoform>
</comment>
<comment type="tissue specificity">
    <text evidence="3 6 7">Expression in head motor neurons, occasionally in HSN neurons and weakly in other cells in the vulval region (PubMed:12628183). Expressed in the primary synapse region of HSNL motor neuron (PubMed:18675916, PubMed:21858180).</text>
</comment>
<comment type="developmental stage">
    <text evidence="5">Localized to the primary synapse region in the vulva from early larval stage L4 to young adult stage.</text>
</comment>
<comment type="domain">
    <text evidence="6">The first Ig-like domain is necessary for localization to the primary synapse region of HSNL motor neurons.</text>
</comment>
<comment type="disruption phenotype">
    <text evidence="3 4 5">Animals are viable, fertile and coordinated (PubMed:12628183). Defective HSN axon branching at the vulva (PubMed:12628183). Abnormal synaptic vesicle clustering in HSNL motor neuron (PubMed:12628183, PubMed:15035988). Synapses in the secondary synapse region, anterior to the vulva, are not eliminated during synapse development and persist into adulthood (PubMed:17626846).</text>
</comment>
<comment type="similarity">
    <text evidence="10">Belongs to the immunoglobulin superfamily.</text>
</comment>
<dbReference type="EMBL" id="BX284606">
    <property type="protein sequence ID" value="CCD72282.1"/>
    <property type="molecule type" value="Genomic_DNA"/>
</dbReference>
<dbReference type="EMBL" id="BX284606">
    <property type="protein sequence ID" value="CCD72283.1"/>
    <property type="molecule type" value="Genomic_DNA"/>
</dbReference>
<dbReference type="RefSeq" id="NP_001123159.1">
    <molecule id="B1Q236-1"/>
    <property type="nucleotide sequence ID" value="NM_001129687.6"/>
</dbReference>
<dbReference type="RefSeq" id="NP_508457.3">
    <molecule id="B1Q236-2"/>
    <property type="nucleotide sequence ID" value="NM_076056.6"/>
</dbReference>
<dbReference type="PDB" id="4OF0">
    <property type="method" value="X-ray"/>
    <property type="resolution" value="2.30 A"/>
    <property type="chains" value="A=19-271"/>
</dbReference>
<dbReference type="PDB" id="4OF3">
    <property type="method" value="X-ray"/>
    <property type="resolution" value="2.50 A"/>
    <property type="chains" value="A/B=19-282"/>
</dbReference>
<dbReference type="PDB" id="4OF6">
    <property type="method" value="X-ray"/>
    <property type="resolution" value="1.70 A"/>
    <property type="chains" value="A/B=19-129"/>
</dbReference>
<dbReference type="PDB" id="4OF7">
    <property type="method" value="X-ray"/>
    <property type="resolution" value="2.10 A"/>
    <property type="chains" value="A/B/C/D=19-129"/>
</dbReference>
<dbReference type="PDB" id="4OFY">
    <property type="method" value="X-ray"/>
    <property type="resolution" value="3.30 A"/>
    <property type="chains" value="A/B/C=19-271"/>
</dbReference>
<dbReference type="PDBsum" id="4OF0"/>
<dbReference type="PDBsum" id="4OF3"/>
<dbReference type="PDBsum" id="4OF6"/>
<dbReference type="PDBsum" id="4OF7"/>
<dbReference type="PDBsum" id="4OFY"/>
<dbReference type="SMR" id="B1Q236"/>
<dbReference type="ComplexPortal" id="CPX-2973">
    <property type="entry name" value="syg-1-syg-2 cell adhesion complex"/>
</dbReference>
<dbReference type="FunCoup" id="B1Q236">
    <property type="interactions" value="237"/>
</dbReference>
<dbReference type="IntAct" id="B1Q236">
    <property type="interactions" value="1"/>
</dbReference>
<dbReference type="STRING" id="6239.K02E10.8b.1"/>
<dbReference type="GlyCosmos" id="B1Q236">
    <property type="glycosylation" value="2 sites, No reported glycans"/>
</dbReference>
<dbReference type="PaxDb" id="6239-K02E10.8b"/>
<dbReference type="PeptideAtlas" id="B1Q236"/>
<dbReference type="EnsemblMetazoa" id="K02E10.8a.1">
    <molecule id="B1Q236-2"/>
    <property type="protein sequence ID" value="K02E10.8a.1"/>
    <property type="gene ID" value="WBGene00006365"/>
</dbReference>
<dbReference type="EnsemblMetazoa" id="K02E10.8b.1">
    <molecule id="B1Q236-1"/>
    <property type="protein sequence ID" value="K02E10.8b.1"/>
    <property type="gene ID" value="WBGene00006365"/>
</dbReference>
<dbReference type="GeneID" id="180555"/>
<dbReference type="KEGG" id="cel:CELE_K02E10.8"/>
<dbReference type="UCSC" id="K02E10.8b">
    <molecule id="B1Q236-1"/>
    <property type="organism name" value="c. elegans"/>
</dbReference>
<dbReference type="AGR" id="WB:WBGene00006365"/>
<dbReference type="CTD" id="180555"/>
<dbReference type="WormBase" id="K02E10.8a">
    <molecule id="B1Q236-2"/>
    <property type="protein sequence ID" value="CE37121"/>
    <property type="gene ID" value="WBGene00006365"/>
    <property type="gene designation" value="syg-1"/>
</dbReference>
<dbReference type="WormBase" id="K02E10.8b">
    <molecule id="B1Q236-1"/>
    <property type="protein sequence ID" value="CE42267"/>
    <property type="gene ID" value="WBGene00006365"/>
    <property type="gene designation" value="syg-1"/>
</dbReference>
<dbReference type="eggNOG" id="KOG3510">
    <property type="taxonomic scope" value="Eukaryota"/>
</dbReference>
<dbReference type="GeneTree" id="ENSGT00940000168476"/>
<dbReference type="HOGENOM" id="CLU_013520_2_1_1"/>
<dbReference type="InParanoid" id="B1Q236"/>
<dbReference type="OMA" id="TLKMEDH"/>
<dbReference type="OrthoDB" id="6413693at2759"/>
<dbReference type="Reactome" id="R-CEL-373753">
    <property type="pathway name" value="Nephrin family interactions"/>
</dbReference>
<dbReference type="EvolutionaryTrace" id="B1Q236"/>
<dbReference type="PRO" id="PR:B1Q236"/>
<dbReference type="Proteomes" id="UP000001940">
    <property type="component" value="Chromosome X"/>
</dbReference>
<dbReference type="Bgee" id="WBGene00006365">
    <property type="expression patterns" value="Expressed in pharyngeal muscle cell (C elegans) and 3 other cell types or tissues"/>
</dbReference>
<dbReference type="ExpressionAtlas" id="B1Q236">
    <property type="expression patterns" value="baseline and differential"/>
</dbReference>
<dbReference type="GO" id="GO:0030424">
    <property type="term" value="C:axon"/>
    <property type="evidence" value="ECO:0000314"/>
    <property type="project" value="WormBase"/>
</dbReference>
<dbReference type="GO" id="GO:0005911">
    <property type="term" value="C:cell-cell junction"/>
    <property type="evidence" value="ECO:0000318"/>
    <property type="project" value="GO_Central"/>
</dbReference>
<dbReference type="GO" id="GO:0005886">
    <property type="term" value="C:plasma membrane"/>
    <property type="evidence" value="ECO:0000250"/>
    <property type="project" value="WormBase"/>
</dbReference>
<dbReference type="GO" id="GO:0098636">
    <property type="term" value="C:protein complex involved in cell adhesion"/>
    <property type="evidence" value="ECO:0000353"/>
    <property type="project" value="ComplexPortal"/>
</dbReference>
<dbReference type="GO" id="GO:0045202">
    <property type="term" value="C:synapse"/>
    <property type="evidence" value="ECO:0000314"/>
    <property type="project" value="WormBase"/>
</dbReference>
<dbReference type="GO" id="GO:0097060">
    <property type="term" value="C:synaptic membrane"/>
    <property type="evidence" value="ECO:0000314"/>
    <property type="project" value="ComplexPortal"/>
</dbReference>
<dbReference type="GO" id="GO:0050839">
    <property type="term" value="F:cell adhesion molecule binding"/>
    <property type="evidence" value="ECO:0000353"/>
    <property type="project" value="WormBase"/>
</dbReference>
<dbReference type="GO" id="GO:0044877">
    <property type="term" value="F:protein-containing complex binding"/>
    <property type="evidence" value="ECO:0000353"/>
    <property type="project" value="UniProtKB"/>
</dbReference>
<dbReference type="GO" id="GO:0051017">
    <property type="term" value="P:actin filament bundle assembly"/>
    <property type="evidence" value="ECO:0000315"/>
    <property type="project" value="UniProtKB"/>
</dbReference>
<dbReference type="GO" id="GO:0048755">
    <property type="term" value="P:branching morphogenesis of a nerve"/>
    <property type="evidence" value="ECO:0000315"/>
    <property type="project" value="WormBase"/>
</dbReference>
<dbReference type="GO" id="GO:0098609">
    <property type="term" value="P:cell-cell adhesion"/>
    <property type="evidence" value="ECO:0000314"/>
    <property type="project" value="ComplexPortal"/>
</dbReference>
<dbReference type="GO" id="GO:0007267">
    <property type="term" value="P:cell-cell signaling"/>
    <property type="evidence" value="ECO:0000315"/>
    <property type="project" value="WormBase"/>
</dbReference>
<dbReference type="GO" id="GO:0048668">
    <property type="term" value="P:collateral sprouting"/>
    <property type="evidence" value="ECO:0000315"/>
    <property type="project" value="UniProtKB"/>
</dbReference>
<dbReference type="GO" id="GO:0007416">
    <property type="term" value="P:synapse assembly"/>
    <property type="evidence" value="ECO:0000314"/>
    <property type="project" value="ComplexPortal"/>
</dbReference>
<dbReference type="GO" id="GO:0050808">
    <property type="term" value="P:synapse organization"/>
    <property type="evidence" value="ECO:0000315"/>
    <property type="project" value="WormBase"/>
</dbReference>
<dbReference type="GO" id="GO:0008039">
    <property type="term" value="P:synaptic target recognition"/>
    <property type="evidence" value="ECO:0000315"/>
    <property type="project" value="WormBase"/>
</dbReference>
<dbReference type="FunFam" id="2.60.40.10:FF:000077">
    <property type="entry name" value="Kirre like nephrin family adhesion molecule 3"/>
    <property type="match status" value="1"/>
</dbReference>
<dbReference type="FunFam" id="2.60.40.10:FF:002412">
    <property type="entry name" value="Synaptogenesis protein syg-1"/>
    <property type="match status" value="1"/>
</dbReference>
<dbReference type="Gene3D" id="2.60.40.10">
    <property type="entry name" value="Immunoglobulins"/>
    <property type="match status" value="5"/>
</dbReference>
<dbReference type="InterPro" id="IPR013162">
    <property type="entry name" value="CD80_C2-set"/>
</dbReference>
<dbReference type="InterPro" id="IPR051275">
    <property type="entry name" value="Cell_adhesion_signaling"/>
</dbReference>
<dbReference type="InterPro" id="IPR007110">
    <property type="entry name" value="Ig-like_dom"/>
</dbReference>
<dbReference type="InterPro" id="IPR036179">
    <property type="entry name" value="Ig-like_dom_sf"/>
</dbReference>
<dbReference type="InterPro" id="IPR013783">
    <property type="entry name" value="Ig-like_fold"/>
</dbReference>
<dbReference type="InterPro" id="IPR013098">
    <property type="entry name" value="Ig_I-set"/>
</dbReference>
<dbReference type="InterPro" id="IPR003599">
    <property type="entry name" value="Ig_sub"/>
</dbReference>
<dbReference type="InterPro" id="IPR003598">
    <property type="entry name" value="Ig_sub2"/>
</dbReference>
<dbReference type="PANTHER" id="PTHR11640:SF31">
    <property type="entry name" value="IRREGULAR CHIASM C-ROUGHEST PROTEIN-RELATED"/>
    <property type="match status" value="1"/>
</dbReference>
<dbReference type="PANTHER" id="PTHR11640">
    <property type="entry name" value="NEPHRIN"/>
    <property type="match status" value="1"/>
</dbReference>
<dbReference type="Pfam" id="PF08205">
    <property type="entry name" value="C2-set_2"/>
    <property type="match status" value="1"/>
</dbReference>
<dbReference type="Pfam" id="PF07679">
    <property type="entry name" value="I-set"/>
    <property type="match status" value="1"/>
</dbReference>
<dbReference type="Pfam" id="PF13927">
    <property type="entry name" value="Ig_3"/>
    <property type="match status" value="2"/>
</dbReference>
<dbReference type="SMART" id="SM00409">
    <property type="entry name" value="IG"/>
    <property type="match status" value="4"/>
</dbReference>
<dbReference type="SMART" id="SM00408">
    <property type="entry name" value="IGc2"/>
    <property type="match status" value="4"/>
</dbReference>
<dbReference type="SUPFAM" id="SSF48726">
    <property type="entry name" value="Immunoglobulin"/>
    <property type="match status" value="5"/>
</dbReference>
<dbReference type="PROSITE" id="PS50835">
    <property type="entry name" value="IG_LIKE"/>
    <property type="match status" value="5"/>
</dbReference>
<protein>
    <recommendedName>
        <fullName evidence="10">Synaptogenesis protein syg-1</fullName>
    </recommendedName>
    <alternativeName>
        <fullName evidence="13">Synaptogenesis abnormal protein 1</fullName>
    </alternativeName>
</protein>